<reference key="1">
    <citation type="submission" date="2008-06" db="EMBL/GenBank/DDBJ databases">
        <title>Complete sequence of Stenotrophomonas maltophilia R551-3.</title>
        <authorList>
            <consortium name="US DOE Joint Genome Institute"/>
            <person name="Lucas S."/>
            <person name="Copeland A."/>
            <person name="Lapidus A."/>
            <person name="Glavina del Rio T."/>
            <person name="Dalin E."/>
            <person name="Tice H."/>
            <person name="Pitluck S."/>
            <person name="Chain P."/>
            <person name="Malfatti S."/>
            <person name="Shin M."/>
            <person name="Vergez L."/>
            <person name="Lang D."/>
            <person name="Schmutz J."/>
            <person name="Larimer F."/>
            <person name="Land M."/>
            <person name="Hauser L."/>
            <person name="Kyrpides N."/>
            <person name="Mikhailova N."/>
            <person name="Taghavi S."/>
            <person name="Monchy S."/>
            <person name="Newman L."/>
            <person name="Vangronsveld J."/>
            <person name="van der Lelie D."/>
            <person name="Richardson P."/>
        </authorList>
    </citation>
    <scope>NUCLEOTIDE SEQUENCE [LARGE SCALE GENOMIC DNA]</scope>
    <source>
        <strain>R551-3</strain>
    </source>
</reference>
<dbReference type="EMBL" id="CP001111">
    <property type="protein sequence ID" value="ACF53650.1"/>
    <property type="molecule type" value="Genomic_DNA"/>
</dbReference>
<dbReference type="RefSeq" id="WP_005411638.1">
    <property type="nucleotide sequence ID" value="NC_011071.1"/>
</dbReference>
<dbReference type="SMR" id="B4SNN0"/>
<dbReference type="STRING" id="391008.Smal_3951"/>
<dbReference type="GeneID" id="97263201"/>
<dbReference type="KEGG" id="smt:Smal_3951"/>
<dbReference type="eggNOG" id="COG0227">
    <property type="taxonomic scope" value="Bacteria"/>
</dbReference>
<dbReference type="HOGENOM" id="CLU_064548_3_1_6"/>
<dbReference type="OrthoDB" id="9805609at2"/>
<dbReference type="Proteomes" id="UP000001867">
    <property type="component" value="Chromosome"/>
</dbReference>
<dbReference type="GO" id="GO:0022625">
    <property type="term" value="C:cytosolic large ribosomal subunit"/>
    <property type="evidence" value="ECO:0007669"/>
    <property type="project" value="TreeGrafter"/>
</dbReference>
<dbReference type="GO" id="GO:0003735">
    <property type="term" value="F:structural constituent of ribosome"/>
    <property type="evidence" value="ECO:0007669"/>
    <property type="project" value="InterPro"/>
</dbReference>
<dbReference type="GO" id="GO:0006412">
    <property type="term" value="P:translation"/>
    <property type="evidence" value="ECO:0007669"/>
    <property type="project" value="UniProtKB-UniRule"/>
</dbReference>
<dbReference type="FunFam" id="2.30.170.40:FF:000001">
    <property type="entry name" value="50S ribosomal protein L28"/>
    <property type="match status" value="1"/>
</dbReference>
<dbReference type="Gene3D" id="2.30.170.40">
    <property type="entry name" value="Ribosomal protein L28/L24"/>
    <property type="match status" value="1"/>
</dbReference>
<dbReference type="HAMAP" id="MF_00373">
    <property type="entry name" value="Ribosomal_bL28"/>
    <property type="match status" value="1"/>
</dbReference>
<dbReference type="InterPro" id="IPR026569">
    <property type="entry name" value="Ribosomal_bL28"/>
</dbReference>
<dbReference type="InterPro" id="IPR034704">
    <property type="entry name" value="Ribosomal_bL28/bL31-like_sf"/>
</dbReference>
<dbReference type="InterPro" id="IPR001383">
    <property type="entry name" value="Ribosomal_bL28_bact-type"/>
</dbReference>
<dbReference type="InterPro" id="IPR037147">
    <property type="entry name" value="Ribosomal_bL28_sf"/>
</dbReference>
<dbReference type="NCBIfam" id="TIGR00009">
    <property type="entry name" value="L28"/>
    <property type="match status" value="1"/>
</dbReference>
<dbReference type="PANTHER" id="PTHR13528">
    <property type="entry name" value="39S RIBOSOMAL PROTEIN L28, MITOCHONDRIAL"/>
    <property type="match status" value="1"/>
</dbReference>
<dbReference type="PANTHER" id="PTHR13528:SF2">
    <property type="entry name" value="LARGE RIBOSOMAL SUBUNIT PROTEIN BL28M"/>
    <property type="match status" value="1"/>
</dbReference>
<dbReference type="Pfam" id="PF00830">
    <property type="entry name" value="Ribosomal_L28"/>
    <property type="match status" value="1"/>
</dbReference>
<dbReference type="SUPFAM" id="SSF143800">
    <property type="entry name" value="L28p-like"/>
    <property type="match status" value="1"/>
</dbReference>
<name>RL28_STRM5</name>
<gene>
    <name evidence="1" type="primary">rpmB</name>
    <name type="ordered locus">Smal_3951</name>
</gene>
<evidence type="ECO:0000255" key="1">
    <source>
        <dbReference type="HAMAP-Rule" id="MF_00373"/>
    </source>
</evidence>
<evidence type="ECO:0000256" key="2">
    <source>
        <dbReference type="SAM" id="MobiDB-lite"/>
    </source>
</evidence>
<evidence type="ECO:0000305" key="3"/>
<sequence>MSRVCQVSGKRVQTGNNVSHANNKTRRRFLPNLHERRFWVASENRWVKLRVSAHALRTIDKNGIDSVLAELRARGEKV</sequence>
<proteinExistence type="inferred from homology"/>
<protein>
    <recommendedName>
        <fullName evidence="1">Large ribosomal subunit protein bL28</fullName>
    </recommendedName>
    <alternativeName>
        <fullName evidence="3">50S ribosomal protein L28</fullName>
    </alternativeName>
</protein>
<feature type="chain" id="PRO_1000121692" description="Large ribosomal subunit protein bL28">
    <location>
        <begin position="1"/>
        <end position="78"/>
    </location>
</feature>
<feature type="region of interest" description="Disordered" evidence="2">
    <location>
        <begin position="1"/>
        <end position="23"/>
    </location>
</feature>
<feature type="compositionally biased region" description="Polar residues" evidence="2">
    <location>
        <begin position="11"/>
        <end position="22"/>
    </location>
</feature>
<organism>
    <name type="scientific">Stenotrophomonas maltophilia (strain R551-3)</name>
    <dbReference type="NCBI Taxonomy" id="391008"/>
    <lineage>
        <taxon>Bacteria</taxon>
        <taxon>Pseudomonadati</taxon>
        <taxon>Pseudomonadota</taxon>
        <taxon>Gammaproteobacteria</taxon>
        <taxon>Lysobacterales</taxon>
        <taxon>Lysobacteraceae</taxon>
        <taxon>Stenotrophomonas</taxon>
        <taxon>Stenotrophomonas maltophilia group</taxon>
    </lineage>
</organism>
<accession>B4SNN0</accession>
<keyword id="KW-0687">Ribonucleoprotein</keyword>
<keyword id="KW-0689">Ribosomal protein</keyword>
<comment type="similarity">
    <text evidence="1">Belongs to the bacterial ribosomal protein bL28 family.</text>
</comment>